<reference key="1">
    <citation type="journal article" date="2010" name="Zoology">
        <title>Transcriptome analysis of the venom glands of the Chinese wolf spider Lycosa singoriensis.</title>
        <authorList>
            <person name="Zhang Y."/>
            <person name="Chen J."/>
            <person name="Tang X."/>
            <person name="Wang F."/>
            <person name="Jiang L."/>
            <person name="Xiong X."/>
            <person name="Wang M."/>
            <person name="Rong M."/>
            <person name="Liu Z."/>
            <person name="Liang S."/>
        </authorList>
    </citation>
    <scope>NUCLEOTIDE SEQUENCE [LARGE SCALE MRNA]</scope>
    <source>
        <tissue>Venom gland</tissue>
    </source>
</reference>
<keyword id="KW-1015">Disulfide bond</keyword>
<keyword id="KW-0960">Knottin</keyword>
<keyword id="KW-0964">Secreted</keyword>
<keyword id="KW-0732">Signal</keyword>
<keyword id="KW-0800">Toxin</keyword>
<sequence>MMKVLVVVALLVTLISYSSSEGIDDLEADELLSLMANEQTRAKACTPRFYDCSHDRHSCCRSELFKDVCTCFYPEGGDNEVCTCQQPKHLKYMEKAAGKAKKFGGKIKKWFG</sequence>
<organism>
    <name type="scientific">Lycosa singoriensis</name>
    <name type="common">Wolf spider</name>
    <name type="synonym">Aranea singoriensis</name>
    <dbReference type="NCBI Taxonomy" id="434756"/>
    <lineage>
        <taxon>Eukaryota</taxon>
        <taxon>Metazoa</taxon>
        <taxon>Ecdysozoa</taxon>
        <taxon>Arthropoda</taxon>
        <taxon>Chelicerata</taxon>
        <taxon>Arachnida</taxon>
        <taxon>Araneae</taxon>
        <taxon>Araneomorphae</taxon>
        <taxon>Entelegynae</taxon>
        <taxon>Lycosoidea</taxon>
        <taxon>Lycosidae</taxon>
        <taxon>Lycosa</taxon>
    </lineage>
</organism>
<evidence type="ECO:0000250" key="1"/>
<evidence type="ECO:0000255" key="2"/>
<evidence type="ECO:0000305" key="3"/>
<feature type="signal peptide" evidence="2">
    <location>
        <begin position="1"/>
        <end position="20"/>
    </location>
</feature>
<feature type="propeptide" id="PRO_0000401709" evidence="1">
    <location>
        <begin position="21"/>
        <end position="41"/>
    </location>
</feature>
<feature type="chain" id="PRO_0000401710" description="Toxin-like structure LSTX-D10">
    <location>
        <begin position="42"/>
        <end position="112"/>
    </location>
</feature>
<feature type="disulfide bond" evidence="1">
    <location>
        <begin position="45"/>
        <end position="60"/>
    </location>
</feature>
<feature type="disulfide bond" evidence="1">
    <location>
        <begin position="52"/>
        <end position="69"/>
    </location>
</feature>
<feature type="disulfide bond" evidence="1">
    <location>
        <begin position="59"/>
        <end position="84"/>
    </location>
</feature>
<feature type="disulfide bond" evidence="1">
    <location>
        <begin position="71"/>
        <end position="82"/>
    </location>
</feature>
<dbReference type="EMBL" id="EU926033">
    <property type="protein sequence ID" value="ACI41365.1"/>
    <property type="molecule type" value="mRNA"/>
</dbReference>
<dbReference type="EMBL" id="FM864037">
    <property type="protein sequence ID" value="CAS03634.1"/>
    <property type="molecule type" value="mRNA"/>
</dbReference>
<dbReference type="SMR" id="B6DCU9"/>
<dbReference type="ArachnoServer" id="AS001730">
    <property type="toxin name" value="U3-lycotoxin-Ls1ab"/>
</dbReference>
<dbReference type="GO" id="GO:0005576">
    <property type="term" value="C:extracellular region"/>
    <property type="evidence" value="ECO:0007669"/>
    <property type="project" value="UniProtKB-SubCell"/>
</dbReference>
<dbReference type="GO" id="GO:0090729">
    <property type="term" value="F:toxin activity"/>
    <property type="evidence" value="ECO:0007669"/>
    <property type="project" value="UniProtKB-KW"/>
</dbReference>
<dbReference type="InterPro" id="IPR019553">
    <property type="entry name" value="Spider_toxin_CSTX_knottin"/>
</dbReference>
<dbReference type="InterPro" id="IPR011142">
    <property type="entry name" value="Spider_toxin_CSTX_Knottin_CS"/>
</dbReference>
<dbReference type="Pfam" id="PF10530">
    <property type="entry name" value="Toxin_35"/>
    <property type="match status" value="1"/>
</dbReference>
<dbReference type="PROSITE" id="PS60029">
    <property type="entry name" value="SPIDER_CSTX"/>
    <property type="match status" value="1"/>
</dbReference>
<accession>B6DCU9</accession>
<name>TXZ10_LYCSI</name>
<proteinExistence type="evidence at transcript level"/>
<protein>
    <recommendedName>
        <fullName>Toxin-like structure LSTX-D10</fullName>
    </recommendedName>
</protein>
<comment type="subcellular location">
    <subcellularLocation>
        <location evidence="1">Secreted</location>
    </subcellularLocation>
</comment>
<comment type="tissue specificity">
    <text>Expressed by the venom gland.</text>
</comment>
<comment type="domain">
    <text evidence="1">The presence of a 'disulfide through disulfide knot' structurally defines this protein as a knottin.</text>
</comment>
<comment type="similarity">
    <text evidence="3">Belongs to the neurotoxin 19 (CSTX) family. 01 subfamily.</text>
</comment>